<keyword id="KW-0884">PQQ biosynthesis</keyword>
<keyword id="KW-1185">Reference proteome</keyword>
<proteinExistence type="inferred from homology"/>
<comment type="function">
    <text>Functions as a PqqA binding protein and presents PqqA to PqqE, in the pyrroloquinoline quinone (PQQ) biosynthetic pathway.</text>
</comment>
<comment type="pathway">
    <text>Cofactor biosynthesis; pyrroloquinoline quinone biosynthesis.</text>
</comment>
<comment type="subunit">
    <text>Monomer. Interacts with PqqE.</text>
</comment>
<comment type="similarity">
    <text evidence="1">Belongs to the PqqD family.</text>
</comment>
<protein>
    <recommendedName>
        <fullName>PqqA binding protein</fullName>
    </recommendedName>
    <alternativeName>
        <fullName>Coenzyme PQQ synthesis protein D</fullName>
    </alternativeName>
    <alternativeName>
        <fullName>Pyrroloquinoline quinone biosynthesis protein D</fullName>
    </alternativeName>
</protein>
<gene>
    <name type="primary">pqqD</name>
    <name type="ordered locus">blr6738</name>
</gene>
<accession>Q89FG2</accession>
<organism>
    <name type="scientific">Bradyrhizobium diazoefficiens (strain JCM 10833 / BCRC 13528 / IAM 13628 / NBRC 14792 / USDA 110)</name>
    <dbReference type="NCBI Taxonomy" id="224911"/>
    <lineage>
        <taxon>Bacteria</taxon>
        <taxon>Pseudomonadati</taxon>
        <taxon>Pseudomonadota</taxon>
        <taxon>Alphaproteobacteria</taxon>
        <taxon>Hyphomicrobiales</taxon>
        <taxon>Nitrobacteraceae</taxon>
        <taxon>Bradyrhizobium</taxon>
    </lineage>
</organism>
<name>PQQD_BRADU</name>
<evidence type="ECO:0000305" key="1"/>
<feature type="chain" id="PRO_0000219960" description="PqqA binding protein">
    <location>
        <begin position="1"/>
        <end position="103"/>
    </location>
</feature>
<reference key="1">
    <citation type="journal article" date="2002" name="DNA Res.">
        <title>Complete genomic sequence of nitrogen-fixing symbiotic bacterium Bradyrhizobium japonicum USDA110.</title>
        <authorList>
            <person name="Kaneko T."/>
            <person name="Nakamura Y."/>
            <person name="Sato S."/>
            <person name="Minamisawa K."/>
            <person name="Uchiumi T."/>
            <person name="Sasamoto S."/>
            <person name="Watanabe A."/>
            <person name="Idesawa K."/>
            <person name="Iriguchi M."/>
            <person name="Kawashima K."/>
            <person name="Kohara M."/>
            <person name="Matsumoto M."/>
            <person name="Shimpo S."/>
            <person name="Tsuruoka H."/>
            <person name="Wada T."/>
            <person name="Yamada M."/>
            <person name="Tabata S."/>
        </authorList>
    </citation>
    <scope>NUCLEOTIDE SEQUENCE [LARGE SCALE GENOMIC DNA]</scope>
    <source>
        <strain>JCM 10833 / BCRC 13528 / IAM 13628 / NBRC 14792 / USDA 110</strain>
    </source>
</reference>
<sequence>MAGPRHISVSEASRPVLPRHAKLKYDETREVWVILAPERVLAPDEIAVEVLQLCNGERSVGDVSDQLAAKYAAPREAILTDVIAMLQDLADKGFLTEAREKTS</sequence>
<dbReference type="EMBL" id="BA000040">
    <property type="protein sequence ID" value="BAC52003.1"/>
    <property type="molecule type" value="Genomic_DNA"/>
</dbReference>
<dbReference type="RefSeq" id="NP_773378.1">
    <property type="nucleotide sequence ID" value="NC_004463.1"/>
</dbReference>
<dbReference type="RefSeq" id="WP_011089477.1">
    <property type="nucleotide sequence ID" value="NC_004463.1"/>
</dbReference>
<dbReference type="SMR" id="Q89FG2"/>
<dbReference type="STRING" id="224911.AAV28_31285"/>
<dbReference type="EnsemblBacteria" id="BAC52003">
    <property type="protein sequence ID" value="BAC52003"/>
    <property type="gene ID" value="BAC52003"/>
</dbReference>
<dbReference type="GeneID" id="46493712"/>
<dbReference type="KEGG" id="bja:blr6738"/>
<dbReference type="PATRIC" id="fig|224911.44.peg.6759"/>
<dbReference type="eggNOG" id="COG0535">
    <property type="taxonomic scope" value="Bacteria"/>
</dbReference>
<dbReference type="HOGENOM" id="CLU_163864_0_0_5"/>
<dbReference type="InParanoid" id="Q89FG2"/>
<dbReference type="OrthoDB" id="7995890at2"/>
<dbReference type="PhylomeDB" id="Q89FG2"/>
<dbReference type="UniPathway" id="UPA00539"/>
<dbReference type="Proteomes" id="UP000002526">
    <property type="component" value="Chromosome"/>
</dbReference>
<dbReference type="GO" id="GO:0048038">
    <property type="term" value="F:quinone binding"/>
    <property type="evidence" value="ECO:0007669"/>
    <property type="project" value="InterPro"/>
</dbReference>
<dbReference type="GO" id="GO:0018189">
    <property type="term" value="P:pyrroloquinoline quinone biosynthetic process"/>
    <property type="evidence" value="ECO:0007669"/>
    <property type="project" value="UniProtKB-UniRule"/>
</dbReference>
<dbReference type="Gene3D" id="1.10.10.1150">
    <property type="entry name" value="Coenzyme PQQ synthesis protein D (PqqD)"/>
    <property type="match status" value="1"/>
</dbReference>
<dbReference type="HAMAP" id="MF_00655">
    <property type="entry name" value="PQQ_syn_PqqD"/>
    <property type="match status" value="1"/>
</dbReference>
<dbReference type="InterPro" id="IPR008792">
    <property type="entry name" value="PQQD"/>
</dbReference>
<dbReference type="InterPro" id="IPR022479">
    <property type="entry name" value="PqqD_bac"/>
</dbReference>
<dbReference type="InterPro" id="IPR041881">
    <property type="entry name" value="PqqD_sf"/>
</dbReference>
<dbReference type="NCBIfam" id="TIGR03859">
    <property type="entry name" value="PQQ_PqqD"/>
    <property type="match status" value="1"/>
</dbReference>
<dbReference type="Pfam" id="PF05402">
    <property type="entry name" value="PqqD"/>
    <property type="match status" value="1"/>
</dbReference>